<dbReference type="EMBL" id="M35547">
    <property type="protein sequence ID" value="AAA45897.1"/>
    <property type="molecule type" value="Genomic_DNA"/>
</dbReference>
<dbReference type="EMBL" id="AJ507799">
    <property type="protein sequence ID" value="CAD53458.1"/>
    <property type="molecule type" value="Genomic_DNA"/>
</dbReference>
<dbReference type="PIR" id="S27924">
    <property type="entry name" value="S27924"/>
</dbReference>
<dbReference type="RefSeq" id="YP_401708.1">
    <property type="nucleotide sequence ID" value="NC_007605.1"/>
</dbReference>
<dbReference type="SMR" id="P0C725"/>
<dbReference type="IntAct" id="P0C725">
    <property type="interactions" value="3"/>
</dbReference>
<dbReference type="MINT" id="P0C725"/>
<dbReference type="DNASU" id="3783748"/>
<dbReference type="GeneID" id="3783748"/>
<dbReference type="KEGG" id="vg:3783748"/>
<dbReference type="SIGNOR" id="P0C725"/>
<dbReference type="Proteomes" id="UP000153037">
    <property type="component" value="Segment"/>
</dbReference>
<dbReference type="GO" id="GO:0010629">
    <property type="term" value="P:negative regulation of gene expression"/>
    <property type="evidence" value="ECO:0000314"/>
    <property type="project" value="CACAO"/>
</dbReference>
<dbReference type="GO" id="GO:0052170">
    <property type="term" value="P:symbiont-mediated suppression of host innate immune response"/>
    <property type="evidence" value="ECO:0007669"/>
    <property type="project" value="UniProtKB-KW"/>
</dbReference>
<dbReference type="InterPro" id="IPR006882">
    <property type="entry name" value="Herpes_Orf11"/>
</dbReference>
<dbReference type="Pfam" id="PF04797">
    <property type="entry name" value="Herpes_ORF11"/>
    <property type="match status" value="1"/>
</dbReference>
<reference key="1">
    <citation type="journal article" date="1990" name="Virology">
        <title>Sequence and transcription of Raji Epstein-Barr virus DNA spanning the B95-8 deletion region.</title>
        <authorList>
            <person name="Parker B.D."/>
            <person name="Bankier A."/>
            <person name="Satchwell S."/>
            <person name="Barrell B."/>
            <person name="Farrell P.J."/>
        </authorList>
    </citation>
    <scope>NUCLEOTIDE SEQUENCE [GENOMIC DNA]</scope>
    <source>
        <strain>Raji</strain>
    </source>
</reference>
<reference key="2">
    <citation type="journal article" date="2003" name="Virology">
        <title>Updated Epstein-Barr virus (EBV) DNA sequence and analysis of a promoter for the BART (CST, BARF0) RNAs of EBV.</title>
        <authorList>
            <person name="de Jesus O."/>
            <person name="Smith P.R."/>
            <person name="Spender L.C."/>
            <person name="Elgueta Karstegl C."/>
            <person name="Niller H.H."/>
            <person name="Huang D."/>
            <person name="Farrell P.J."/>
        </authorList>
    </citation>
    <scope>GENOME REANNOTATION</scope>
    <source>
        <strain>B95-8/Raji</strain>
    </source>
</reference>
<reference key="3">
    <citation type="journal article" date="2008" name="J. Virol.">
        <title>The Epstein-Barr virus LF2 protein inhibits viral replication.</title>
        <authorList>
            <person name="Calderwood M.A."/>
            <person name="Holthaus A.M."/>
            <person name="Johannsen E."/>
        </authorList>
    </citation>
    <scope>INTERACTION WITH BRLF1</scope>
</reference>
<reference key="4">
    <citation type="journal article" date="2009" name="J. Virol.">
        <title>Epstein-Barr virus LF2: an antagonist to type I interferon.</title>
        <authorList>
            <person name="Wu L."/>
            <person name="Fossum E."/>
            <person name="Joo C.H."/>
            <person name="Inn K.S."/>
            <person name="Shin Y.C."/>
            <person name="Johannsen E."/>
            <person name="Hutt-Fletcher L.M."/>
            <person name="Hass J."/>
            <person name="Jung J.U."/>
        </authorList>
    </citation>
    <scope>INTERACTION WITH HOST IRF7</scope>
</reference>
<evidence type="ECO:0000269" key="1">
    <source>
    </source>
</evidence>
<evidence type="ECO:0000269" key="2">
    <source>
    </source>
</evidence>
<evidence type="ECO:0000305" key="3"/>
<name>LF2_EBVB9</name>
<comment type="function">
    <text>Prevents the establishment of cellular antiviral state by blocking the cellular IRF7-mediated innate immunity. May also inhibit viral replication by modulating BRLF1 activity.</text>
</comment>
<comment type="subunit">
    <text evidence="1 2">Interacts with host IRF7; this interaction inhibits IRF7 dimerization, thereby altering its function in immunity. Interacts with BRLF1.</text>
</comment>
<comment type="similarity">
    <text evidence="3">Belongs to the epstein-barr virus LF2 family.</text>
</comment>
<comment type="caution">
    <text evidence="3">PubMed:12771413 displays a sequence of strain B95-8, which contains a deletion restored by the DNA of strain Raji in order to get a more representative sequence of wild type EBV. This protein is encoded by the DNA of Raji strain.</text>
</comment>
<sequence length="429" mass="48422">MAEAYPGGAHAALASRRSSFRNSLRRLRPTEKPDTSFMRGVWKYEIFPSYVRVTNKQVLQLDAQCQELPPCPSVGQILSFKLPSFSFNTTTYGSRYFTVAFLFFGAEDNEVFLKPFFVMHSDQDIVLSVLNPRSLFIEKGKFTWYIVPIRLVKNPYLYLQILPGQSDIQLTRSCTQSGDKLNTSEPQIFLSGSPVTSQDECLPYLLAQHTPPFLKSYARIHTFPGKVCPVNAIRRGKGYVRVSVDTPDLKREGPLNVKVGMTLLDDVIIAFRYNPYPKSHWRWDGESTDIRYFGSPVIIPPNFITELEYNNTYEAPLSSKITAVVVSHSSNPVFYVYPQEWKPGQTLKLTVRNISNNPITIVTGQSMAQAFFIYAGDPSISTIMRRYIQRQGCALTLPGNIVVESSSLPTFERINKTFNGNIVASEGTL</sequence>
<gene>
    <name type="primary">LF2</name>
</gene>
<protein>
    <recommendedName>
        <fullName>Protein LF2</fullName>
    </recommendedName>
</protein>
<accession>P0C725</accession>
<accession>Q99306</accession>
<feature type="chain" id="PRO_0000382450" description="Protein LF2">
    <location>
        <begin position="1"/>
        <end position="429"/>
    </location>
</feature>
<proteinExistence type="evidence at protein level"/>
<organismHost>
    <name type="scientific">Homo sapiens</name>
    <name type="common">Human</name>
    <dbReference type="NCBI Taxonomy" id="9606"/>
</organismHost>
<keyword id="KW-0945">Host-virus interaction</keyword>
<keyword id="KW-1090">Inhibition of host innate immune response by virus</keyword>
<keyword id="KW-0922">Interferon antiviral system evasion</keyword>
<keyword id="KW-1185">Reference proteome</keyword>
<keyword id="KW-0899">Viral immunoevasion</keyword>
<organism>
    <name type="scientific">Epstein-Barr virus (strain B95-8)</name>
    <name type="common">HHV-4</name>
    <name type="synonym">Human herpesvirus 4</name>
    <dbReference type="NCBI Taxonomy" id="10377"/>
    <lineage>
        <taxon>Viruses</taxon>
        <taxon>Duplodnaviria</taxon>
        <taxon>Heunggongvirae</taxon>
        <taxon>Peploviricota</taxon>
        <taxon>Herviviricetes</taxon>
        <taxon>Herpesvirales</taxon>
        <taxon>Orthoherpesviridae</taxon>
        <taxon>Gammaherpesvirinae</taxon>
        <taxon>Lymphocryptovirus</taxon>
        <taxon>Lymphocryptovirus humangamma4</taxon>
        <taxon>Epstein-Barr virus (strain GD1)</taxon>
    </lineage>
</organism>